<feature type="chain" id="PRO_1000195318" description="Protein-export protein SecB">
    <location>
        <begin position="1"/>
        <end position="155"/>
    </location>
</feature>
<accession>B6I3I8</accession>
<sequence>MSEQNNTEMTFQIQRIYTKDISFEAPNAPHVFQKDWQPEVKLDLDTASTQLADDVYEVVLRVTVTASLGEETAFLCEVQQGGIFSIAGIEGTQMAHCLGAYCPNILFPYARECITSMVSRGTFPQLNLAPVNFDALFMNYLQQQAGEGTEEHQDA</sequence>
<proteinExistence type="inferred from homology"/>
<reference key="1">
    <citation type="journal article" date="2008" name="DNA Res.">
        <title>Complete genome sequence and comparative analysis of the wild-type commensal Escherichia coli strain SE11 isolated from a healthy adult.</title>
        <authorList>
            <person name="Oshima K."/>
            <person name="Toh H."/>
            <person name="Ogura Y."/>
            <person name="Sasamoto H."/>
            <person name="Morita H."/>
            <person name="Park S.-H."/>
            <person name="Ooka T."/>
            <person name="Iyoda S."/>
            <person name="Taylor T.D."/>
            <person name="Hayashi T."/>
            <person name="Itoh K."/>
            <person name="Hattori M."/>
        </authorList>
    </citation>
    <scope>NUCLEOTIDE SEQUENCE [LARGE SCALE GENOMIC DNA]</scope>
    <source>
        <strain>SE11</strain>
    </source>
</reference>
<protein>
    <recommendedName>
        <fullName evidence="1">Protein-export protein SecB</fullName>
    </recommendedName>
</protein>
<gene>
    <name evidence="1" type="primary">secB</name>
    <name type="ordered locus">ECSE_3891</name>
</gene>
<dbReference type="EMBL" id="AP009240">
    <property type="protein sequence ID" value="BAG79415.1"/>
    <property type="molecule type" value="Genomic_DNA"/>
</dbReference>
<dbReference type="RefSeq" id="WP_000003382.1">
    <property type="nucleotide sequence ID" value="NC_011415.1"/>
</dbReference>
<dbReference type="SMR" id="B6I3I8"/>
<dbReference type="GeneID" id="89518465"/>
<dbReference type="KEGG" id="ecy:ECSE_3891"/>
<dbReference type="HOGENOM" id="CLU_111574_1_0_6"/>
<dbReference type="Proteomes" id="UP000008199">
    <property type="component" value="Chromosome"/>
</dbReference>
<dbReference type="GO" id="GO:0005737">
    <property type="term" value="C:cytoplasm"/>
    <property type="evidence" value="ECO:0007669"/>
    <property type="project" value="UniProtKB-SubCell"/>
</dbReference>
<dbReference type="GO" id="GO:0051082">
    <property type="term" value="F:unfolded protein binding"/>
    <property type="evidence" value="ECO:0007669"/>
    <property type="project" value="InterPro"/>
</dbReference>
<dbReference type="GO" id="GO:0006457">
    <property type="term" value="P:protein folding"/>
    <property type="evidence" value="ECO:0007669"/>
    <property type="project" value="UniProtKB-UniRule"/>
</dbReference>
<dbReference type="GO" id="GO:0051262">
    <property type="term" value="P:protein tetramerization"/>
    <property type="evidence" value="ECO:0007669"/>
    <property type="project" value="InterPro"/>
</dbReference>
<dbReference type="GO" id="GO:0015031">
    <property type="term" value="P:protein transport"/>
    <property type="evidence" value="ECO:0007669"/>
    <property type="project" value="UniProtKB-UniRule"/>
</dbReference>
<dbReference type="CDD" id="cd00557">
    <property type="entry name" value="Translocase_SecB"/>
    <property type="match status" value="1"/>
</dbReference>
<dbReference type="FunFam" id="3.10.420.10:FF:000001">
    <property type="entry name" value="Protein-export chaperone SecB"/>
    <property type="match status" value="1"/>
</dbReference>
<dbReference type="Gene3D" id="3.10.420.10">
    <property type="entry name" value="SecB-like"/>
    <property type="match status" value="1"/>
</dbReference>
<dbReference type="HAMAP" id="MF_00821">
    <property type="entry name" value="SecB"/>
    <property type="match status" value="1"/>
</dbReference>
<dbReference type="InterPro" id="IPR003708">
    <property type="entry name" value="SecB"/>
</dbReference>
<dbReference type="InterPro" id="IPR035958">
    <property type="entry name" value="SecB-like_sf"/>
</dbReference>
<dbReference type="NCBIfam" id="NF004390">
    <property type="entry name" value="PRK05751.1-1"/>
    <property type="match status" value="1"/>
</dbReference>
<dbReference type="NCBIfam" id="NF004393">
    <property type="entry name" value="PRK05751.1-4"/>
    <property type="match status" value="1"/>
</dbReference>
<dbReference type="NCBIfam" id="TIGR00809">
    <property type="entry name" value="secB"/>
    <property type="match status" value="1"/>
</dbReference>
<dbReference type="PANTHER" id="PTHR36918">
    <property type="match status" value="1"/>
</dbReference>
<dbReference type="PANTHER" id="PTHR36918:SF1">
    <property type="entry name" value="PROTEIN-EXPORT PROTEIN SECB"/>
    <property type="match status" value="1"/>
</dbReference>
<dbReference type="Pfam" id="PF02556">
    <property type="entry name" value="SecB"/>
    <property type="match status" value="1"/>
</dbReference>
<dbReference type="PRINTS" id="PR01594">
    <property type="entry name" value="SECBCHAPRONE"/>
</dbReference>
<dbReference type="SUPFAM" id="SSF54611">
    <property type="entry name" value="SecB-like"/>
    <property type="match status" value="1"/>
</dbReference>
<name>SECB_ECOSE</name>
<keyword id="KW-0143">Chaperone</keyword>
<keyword id="KW-0963">Cytoplasm</keyword>
<keyword id="KW-0653">Protein transport</keyword>
<keyword id="KW-0811">Translocation</keyword>
<keyword id="KW-0813">Transport</keyword>
<organism>
    <name type="scientific">Escherichia coli (strain SE11)</name>
    <dbReference type="NCBI Taxonomy" id="409438"/>
    <lineage>
        <taxon>Bacteria</taxon>
        <taxon>Pseudomonadati</taxon>
        <taxon>Pseudomonadota</taxon>
        <taxon>Gammaproteobacteria</taxon>
        <taxon>Enterobacterales</taxon>
        <taxon>Enterobacteriaceae</taxon>
        <taxon>Escherichia</taxon>
    </lineage>
</organism>
<comment type="function">
    <text evidence="1">One of the proteins required for the normal export of preproteins out of the cell cytoplasm. It is a molecular chaperone that binds to a subset of precursor proteins, maintaining them in a translocation-competent state. It also specifically binds to its receptor SecA.</text>
</comment>
<comment type="subunit">
    <text evidence="1">Homotetramer, a dimer of dimers. One homotetramer interacts with 1 SecA dimer.</text>
</comment>
<comment type="subcellular location">
    <subcellularLocation>
        <location evidence="1">Cytoplasm</location>
    </subcellularLocation>
</comment>
<comment type="similarity">
    <text evidence="1">Belongs to the SecB family.</text>
</comment>
<evidence type="ECO:0000255" key="1">
    <source>
        <dbReference type="HAMAP-Rule" id="MF_00821"/>
    </source>
</evidence>